<comment type="function">
    <text evidence="1">Catalyzes the anti-1,4-elimination of the C-3 phosphate and the C-6 proR hydrogen from 5-enolpyruvylshikimate-3-phosphate (EPSP) to yield chorismate, which is the branch point compound that serves as the starting substrate for the three terminal pathways of aromatic amino acid biosynthesis. This reaction introduces a second double bond into the aromatic ring system.</text>
</comment>
<comment type="catalytic activity">
    <reaction evidence="1">
        <text>5-O-(1-carboxyvinyl)-3-phosphoshikimate = chorismate + phosphate</text>
        <dbReference type="Rhea" id="RHEA:21020"/>
        <dbReference type="ChEBI" id="CHEBI:29748"/>
        <dbReference type="ChEBI" id="CHEBI:43474"/>
        <dbReference type="ChEBI" id="CHEBI:57701"/>
        <dbReference type="EC" id="4.2.3.5"/>
    </reaction>
</comment>
<comment type="cofactor">
    <cofactor evidence="1">
        <name>FMNH2</name>
        <dbReference type="ChEBI" id="CHEBI:57618"/>
    </cofactor>
    <text evidence="1">Reduced FMN (FMNH(2)).</text>
</comment>
<comment type="pathway">
    <text evidence="1">Metabolic intermediate biosynthesis; chorismate biosynthesis; chorismate from D-erythrose 4-phosphate and phosphoenolpyruvate: step 7/7.</text>
</comment>
<comment type="subunit">
    <text evidence="1">Homotetramer.</text>
</comment>
<comment type="similarity">
    <text evidence="1">Belongs to the chorismate synthase family.</text>
</comment>
<evidence type="ECO:0000255" key="1">
    <source>
        <dbReference type="HAMAP-Rule" id="MF_00300"/>
    </source>
</evidence>
<dbReference type="EC" id="4.2.3.5" evidence="1"/>
<dbReference type="EMBL" id="AP009510">
    <property type="protein sequence ID" value="BAG13765.1"/>
    <property type="molecule type" value="Genomic_DNA"/>
</dbReference>
<dbReference type="RefSeq" id="WP_015423292.1">
    <property type="nucleotide sequence ID" value="NC_020419.1"/>
</dbReference>
<dbReference type="SMR" id="B1GZT3"/>
<dbReference type="STRING" id="471821.TGRD_282"/>
<dbReference type="KEGG" id="rsd:TGRD_282"/>
<dbReference type="PATRIC" id="fig|471821.5.peg.427"/>
<dbReference type="HOGENOM" id="CLU_034547_2_0_0"/>
<dbReference type="UniPathway" id="UPA00053">
    <property type="reaction ID" value="UER00090"/>
</dbReference>
<dbReference type="Proteomes" id="UP000001691">
    <property type="component" value="Chromosome"/>
</dbReference>
<dbReference type="GO" id="GO:0005829">
    <property type="term" value="C:cytosol"/>
    <property type="evidence" value="ECO:0007669"/>
    <property type="project" value="TreeGrafter"/>
</dbReference>
<dbReference type="GO" id="GO:0004107">
    <property type="term" value="F:chorismate synthase activity"/>
    <property type="evidence" value="ECO:0007669"/>
    <property type="project" value="UniProtKB-UniRule"/>
</dbReference>
<dbReference type="GO" id="GO:0010181">
    <property type="term" value="F:FMN binding"/>
    <property type="evidence" value="ECO:0007669"/>
    <property type="project" value="TreeGrafter"/>
</dbReference>
<dbReference type="GO" id="GO:0008652">
    <property type="term" value="P:amino acid biosynthetic process"/>
    <property type="evidence" value="ECO:0007669"/>
    <property type="project" value="UniProtKB-KW"/>
</dbReference>
<dbReference type="GO" id="GO:0009073">
    <property type="term" value="P:aromatic amino acid family biosynthetic process"/>
    <property type="evidence" value="ECO:0007669"/>
    <property type="project" value="UniProtKB-KW"/>
</dbReference>
<dbReference type="GO" id="GO:0009423">
    <property type="term" value="P:chorismate biosynthetic process"/>
    <property type="evidence" value="ECO:0007669"/>
    <property type="project" value="UniProtKB-UniRule"/>
</dbReference>
<dbReference type="CDD" id="cd07304">
    <property type="entry name" value="Chorismate_synthase"/>
    <property type="match status" value="1"/>
</dbReference>
<dbReference type="FunFam" id="3.60.150.10:FF:000002">
    <property type="entry name" value="Chorismate synthase"/>
    <property type="match status" value="1"/>
</dbReference>
<dbReference type="Gene3D" id="3.60.150.10">
    <property type="entry name" value="Chorismate synthase AroC"/>
    <property type="match status" value="1"/>
</dbReference>
<dbReference type="HAMAP" id="MF_00300">
    <property type="entry name" value="Chorismate_synth"/>
    <property type="match status" value="1"/>
</dbReference>
<dbReference type="InterPro" id="IPR000453">
    <property type="entry name" value="Chorismate_synth"/>
</dbReference>
<dbReference type="InterPro" id="IPR035904">
    <property type="entry name" value="Chorismate_synth_AroC_sf"/>
</dbReference>
<dbReference type="InterPro" id="IPR020541">
    <property type="entry name" value="Chorismate_synthase_CS"/>
</dbReference>
<dbReference type="NCBIfam" id="TIGR00033">
    <property type="entry name" value="aroC"/>
    <property type="match status" value="1"/>
</dbReference>
<dbReference type="NCBIfam" id="NF003793">
    <property type="entry name" value="PRK05382.1"/>
    <property type="match status" value="1"/>
</dbReference>
<dbReference type="PANTHER" id="PTHR21085">
    <property type="entry name" value="CHORISMATE SYNTHASE"/>
    <property type="match status" value="1"/>
</dbReference>
<dbReference type="PANTHER" id="PTHR21085:SF0">
    <property type="entry name" value="CHORISMATE SYNTHASE"/>
    <property type="match status" value="1"/>
</dbReference>
<dbReference type="Pfam" id="PF01264">
    <property type="entry name" value="Chorismate_synt"/>
    <property type="match status" value="1"/>
</dbReference>
<dbReference type="PIRSF" id="PIRSF001456">
    <property type="entry name" value="Chorismate_synth"/>
    <property type="match status" value="1"/>
</dbReference>
<dbReference type="SUPFAM" id="SSF103263">
    <property type="entry name" value="Chorismate synthase, AroC"/>
    <property type="match status" value="1"/>
</dbReference>
<dbReference type="PROSITE" id="PS00788">
    <property type="entry name" value="CHORISMATE_SYNTHASE_2"/>
    <property type="match status" value="1"/>
</dbReference>
<dbReference type="PROSITE" id="PS00789">
    <property type="entry name" value="CHORISMATE_SYNTHASE_3"/>
    <property type="match status" value="1"/>
</dbReference>
<gene>
    <name evidence="1" type="primary">aroC</name>
    <name type="ordered locus">TGRD_282</name>
</gene>
<reference key="1">
    <citation type="journal article" date="2008" name="Proc. Natl. Acad. Sci. U.S.A.">
        <title>Complete genome of the uncultured termite group 1 bacteria in a single host protist cell.</title>
        <authorList>
            <person name="Hongoh Y."/>
            <person name="Sharma V.K."/>
            <person name="Prakash T."/>
            <person name="Noda S."/>
            <person name="Taylor T.D."/>
            <person name="Kudo T."/>
            <person name="Sakaki Y."/>
            <person name="Toyoda A."/>
            <person name="Hattori M."/>
            <person name="Ohkuma M."/>
        </authorList>
    </citation>
    <scope>NUCLEOTIDE SEQUENCE [LARGE SCALE GENOMIC DNA]</scope>
</reference>
<name>AROC_ENDTX</name>
<feature type="chain" id="PRO_1000115413" description="Chorismate synthase">
    <location>
        <begin position="1"/>
        <end position="385"/>
    </location>
</feature>
<feature type="binding site" evidence="1">
    <location>
        <position position="40"/>
    </location>
    <ligand>
        <name>NADP(+)</name>
        <dbReference type="ChEBI" id="CHEBI:58349"/>
    </ligand>
</feature>
<feature type="binding site" evidence="1">
    <location>
        <position position="46"/>
    </location>
    <ligand>
        <name>NADP(+)</name>
        <dbReference type="ChEBI" id="CHEBI:58349"/>
    </ligand>
</feature>
<feature type="binding site" evidence="1">
    <location>
        <begin position="128"/>
        <end position="130"/>
    </location>
    <ligand>
        <name>FMN</name>
        <dbReference type="ChEBI" id="CHEBI:58210"/>
    </ligand>
</feature>
<feature type="binding site" evidence="1">
    <location>
        <begin position="248"/>
        <end position="249"/>
    </location>
    <ligand>
        <name>FMN</name>
        <dbReference type="ChEBI" id="CHEBI:58210"/>
    </ligand>
</feature>
<feature type="binding site" evidence="1">
    <location>
        <position position="293"/>
    </location>
    <ligand>
        <name>FMN</name>
        <dbReference type="ChEBI" id="CHEBI:58210"/>
    </ligand>
</feature>
<feature type="binding site" evidence="1">
    <location>
        <begin position="308"/>
        <end position="312"/>
    </location>
    <ligand>
        <name>FMN</name>
        <dbReference type="ChEBI" id="CHEBI:58210"/>
    </ligand>
</feature>
<feature type="binding site" evidence="1">
    <location>
        <position position="334"/>
    </location>
    <ligand>
        <name>FMN</name>
        <dbReference type="ChEBI" id="CHEBI:58210"/>
    </ligand>
</feature>
<sequence length="385" mass="41398">MIRFTTAGESHGEGLFVIIEGIPAGLTINSEDIDLELARRQKGYGRGQRMCIETDTVKVFSGMRHTVSLGSPIAMYIANKDFKNWTKIMSPTSVDSEVTPLLRPRPGHADLPGFMKYGVNDFRDILERASARETAARVAAGAVCKALLKEFEISIVSYTSQIGDVTADISSVEECKIWHDAEISCVRCPDAKASEKMIQLIKKAGEKGDTLGGKVVVVTKNVPAGLGSHTQWDLKLDGRLAQSLISIQAVKAVEFGAGTKLASLLGALSHDEIFYDVTRGFYRDTNRAGGIEGGMSNGEPIVVTCTMKAIPSLANPLHSVNLATKETAEAEAIRSDVCAVPAVGIVAEAAIAVELAKALKEKFGGDSLKDMKKNVNIYKERIKAL</sequence>
<proteinExistence type="inferred from homology"/>
<accession>B1GZT3</accession>
<organism>
    <name type="scientific">Endomicrobium trichonymphae</name>
    <dbReference type="NCBI Taxonomy" id="1408204"/>
    <lineage>
        <taxon>Bacteria</taxon>
        <taxon>Pseudomonadati</taxon>
        <taxon>Elusimicrobiota</taxon>
        <taxon>Endomicrobiia</taxon>
        <taxon>Endomicrobiales</taxon>
        <taxon>Endomicrobiaceae</taxon>
        <taxon>Candidatus Endomicrobiellum</taxon>
    </lineage>
</organism>
<protein>
    <recommendedName>
        <fullName evidence="1">Chorismate synthase</fullName>
        <shortName evidence="1">CS</shortName>
        <ecNumber evidence="1">4.2.3.5</ecNumber>
    </recommendedName>
    <alternativeName>
        <fullName evidence="1">5-enolpyruvylshikimate-3-phosphate phospholyase</fullName>
    </alternativeName>
</protein>
<keyword id="KW-0028">Amino-acid biosynthesis</keyword>
<keyword id="KW-0057">Aromatic amino acid biosynthesis</keyword>
<keyword id="KW-0274">FAD</keyword>
<keyword id="KW-0285">Flavoprotein</keyword>
<keyword id="KW-0288">FMN</keyword>
<keyword id="KW-0456">Lyase</keyword>
<keyword id="KW-0521">NADP</keyword>